<keyword id="KW-0002">3D-structure</keyword>
<keyword id="KW-0045">Antibiotic biosynthesis</keyword>
<keyword id="KW-0808">Transferase</keyword>
<feature type="chain" id="PRO_0000442847" description="Validamine 7-phosphate valienyltransferase">
    <location>
        <begin position="1"/>
        <end position="497"/>
    </location>
</feature>
<feature type="binding site" evidence="1">
    <location>
        <position position="158"/>
    </location>
    <ligand>
        <name>GDP-valienol</name>
        <dbReference type="ChEBI" id="CHEBI:91253"/>
    </ligand>
</feature>
<feature type="binding site" evidence="6 9">
    <location>
        <position position="182"/>
    </location>
    <ligand>
        <name>validamine 7-phosphate</name>
        <dbReference type="ChEBI" id="CHEBI:111503"/>
    </ligand>
</feature>
<feature type="binding site" evidence="6 9">
    <location>
        <position position="290"/>
    </location>
    <ligand>
        <name>GDP-valienol</name>
        <dbReference type="ChEBI" id="CHEBI:91253"/>
    </ligand>
</feature>
<feature type="binding site" evidence="1">
    <location>
        <position position="295"/>
    </location>
    <ligand>
        <name>GDP-valienol</name>
        <dbReference type="ChEBI" id="CHEBI:91253"/>
    </ligand>
</feature>
<feature type="binding site" evidence="1">
    <location>
        <position position="321"/>
    </location>
    <ligand>
        <name>GDP-valienol</name>
        <dbReference type="ChEBI" id="CHEBI:91253"/>
    </ligand>
</feature>
<feature type="binding site" evidence="1">
    <location>
        <begin position="325"/>
        <end position="326"/>
    </location>
    <ligand>
        <name>GDP-valienol</name>
        <dbReference type="ChEBI" id="CHEBI:91253"/>
    </ligand>
</feature>
<feature type="binding site" evidence="1">
    <location>
        <begin position="361"/>
        <end position="362"/>
    </location>
    <ligand>
        <name>GDP-valienol</name>
        <dbReference type="ChEBI" id="CHEBI:91253"/>
    </ligand>
</feature>
<feature type="binding site" evidence="1">
    <location>
        <position position="366"/>
    </location>
    <ligand>
        <name>GDP-valienol</name>
        <dbReference type="ChEBI" id="CHEBI:91253"/>
    </ligand>
</feature>
<feature type="binding site" evidence="6 9">
    <location>
        <begin position="383"/>
        <end position="386"/>
    </location>
    <ligand>
        <name>validamine 7-phosphate</name>
        <dbReference type="ChEBI" id="CHEBI:111503"/>
    </ligand>
</feature>
<feature type="binding site" evidence="1">
    <location>
        <begin position="387"/>
        <end position="388"/>
    </location>
    <ligand>
        <name>GDP-valienol</name>
        <dbReference type="ChEBI" id="CHEBI:91253"/>
    </ligand>
</feature>
<feature type="binding site" evidence="1">
    <location>
        <position position="391"/>
    </location>
    <ligand>
        <name>GDP-valienol</name>
        <dbReference type="ChEBI" id="CHEBI:91253"/>
    </ligand>
</feature>
<feature type="sequence conflict" description="In Ref. 1; ABA41504." evidence="5" ref="1">
    <location>
        <begin position="194"/>
        <end position="198"/>
    </location>
</feature>
<protein>
    <recommendedName>
        <fullName evidence="4">Validamine 7-phosphate valienyltransferase</fullName>
        <ecNumber evidence="1">2.5.1.135</ecNumber>
    </recommendedName>
    <alternativeName>
        <fullName evidence="1">Pseudoglycosyltransferase</fullName>
    </alternativeName>
    <alternativeName>
        <fullName evidence="1">Trehalose 6-phosphate synthase-like enzyme VldE</fullName>
    </alternativeName>
</protein>
<accession>H2K885</accession>
<accession>Q1L2L2</accession>
<sequence>MTGSEIFLASKRAAITYDTDPATGEPRAWLAPGGTGNVVAEQAGVLNISWIASADSEDDRRASALNPDGVTMELHSGREILVRLIRHDPAVFRNVQNFMTANLMWAANNYGWDRWTQPSFGSDAREGWADFGRFTRDFADAILKSSAQSADPVYLVHDYQLVGVPALLREQRPDAPILLFVHIPWPSADYWRILPKEIRTGILHGMLPATTIGFFADRWCRNFLESVADLLPDARIDREAMTVEWRGHRTRLRTMPLGYSPLTLDGRNPQLPEGIEEWADGHRLVVHSGRTDPIKNAERAVRAFVLAARGGGLEKTRMLVRMNPNRLYVPANADYVHRVETAVAEANAELGSDTVRIDNDNDVNHTIACFRRADLLIFNSTVDGQNLSTFEAPLVNERDADVILSETCGAAEVLGEYCRSVNPFDLVEQAEAISAALAAGPRQRAEAAARRRDAARPWTLEAWVQAQLDGLAADHAARTATAERFDTAPAVSTRADL</sequence>
<dbReference type="EC" id="2.5.1.135" evidence="1"/>
<dbReference type="EMBL" id="DQ164098">
    <property type="protein sequence ID" value="ABA41504.1"/>
    <property type="molecule type" value="Genomic_DNA"/>
</dbReference>
<dbReference type="EMBL" id="CP003275">
    <property type="protein sequence ID" value="AEY85552.1"/>
    <property type="molecule type" value="Genomic_DNA"/>
</dbReference>
<dbReference type="PDB" id="3T5T">
    <property type="method" value="X-ray"/>
    <property type="resolution" value="1.70 A"/>
    <property type="chains" value="A/B=2-497"/>
</dbReference>
<dbReference type="PDB" id="3T7D">
    <property type="method" value="X-ray"/>
    <property type="resolution" value="1.70 A"/>
    <property type="chains" value="A/B=2-497"/>
</dbReference>
<dbReference type="PDBsum" id="3T5T"/>
<dbReference type="PDBsum" id="3T7D"/>
<dbReference type="SMR" id="H2K885"/>
<dbReference type="STRING" id="1133850.SHJG_0274"/>
<dbReference type="CAZy" id="GT20">
    <property type="family name" value="Glycosyltransferase Family 20"/>
</dbReference>
<dbReference type="KEGG" id="shy:SHJG_0274"/>
<dbReference type="PATRIC" id="fig|1133850.20.peg.413"/>
<dbReference type="eggNOG" id="COG0380">
    <property type="taxonomic scope" value="Bacteria"/>
</dbReference>
<dbReference type="HOGENOM" id="CLU_002351_7_1_11"/>
<dbReference type="OrthoDB" id="9761633at2"/>
<dbReference type="BRENDA" id="2.5.1.135">
    <property type="organism ID" value="14749"/>
</dbReference>
<dbReference type="GO" id="GO:0003825">
    <property type="term" value="F:alpha,alpha-trehalose-phosphate synthase (UDP-forming) activity"/>
    <property type="evidence" value="ECO:0007669"/>
    <property type="project" value="TreeGrafter"/>
</dbReference>
<dbReference type="GO" id="GO:0017000">
    <property type="term" value="P:antibiotic biosynthetic process"/>
    <property type="evidence" value="ECO:0007669"/>
    <property type="project" value="UniProtKB-KW"/>
</dbReference>
<dbReference type="GO" id="GO:0005992">
    <property type="term" value="P:trehalose biosynthetic process"/>
    <property type="evidence" value="ECO:0007669"/>
    <property type="project" value="InterPro"/>
</dbReference>
<dbReference type="Gene3D" id="3.40.50.2000">
    <property type="entry name" value="Glycogen Phosphorylase B"/>
    <property type="match status" value="2"/>
</dbReference>
<dbReference type="InterPro" id="IPR001830">
    <property type="entry name" value="Glyco_trans_20"/>
</dbReference>
<dbReference type="PANTHER" id="PTHR10788:SF106">
    <property type="entry name" value="BCDNA.GH08860"/>
    <property type="match status" value="1"/>
</dbReference>
<dbReference type="PANTHER" id="PTHR10788">
    <property type="entry name" value="TREHALOSE-6-PHOSPHATE SYNTHASE"/>
    <property type="match status" value="1"/>
</dbReference>
<dbReference type="Pfam" id="PF00982">
    <property type="entry name" value="Glyco_transf_20"/>
    <property type="match status" value="1"/>
</dbReference>
<dbReference type="SUPFAM" id="SSF53756">
    <property type="entry name" value="UDP-Glycosyltransferase/glycogen phosphorylase"/>
    <property type="match status" value="1"/>
</dbReference>
<evidence type="ECO:0000250" key="1">
    <source>
        <dbReference type="UniProtKB" id="Q15JG1"/>
    </source>
</evidence>
<evidence type="ECO:0000269" key="2">
    <source>
    </source>
</evidence>
<evidence type="ECO:0000269" key="3">
    <source>
    </source>
</evidence>
<evidence type="ECO:0000303" key="4">
    <source>
    </source>
</evidence>
<evidence type="ECO:0000305" key="5"/>
<evidence type="ECO:0000305" key="6">
    <source>
    </source>
</evidence>
<evidence type="ECO:0000312" key="7">
    <source>
        <dbReference type="EMBL" id="ABA41504.1"/>
    </source>
</evidence>
<evidence type="ECO:0000312" key="8">
    <source>
        <dbReference type="EMBL" id="AEY85552.1"/>
    </source>
</evidence>
<evidence type="ECO:0007744" key="9">
    <source>
        <dbReference type="PDB" id="3T7D"/>
    </source>
</evidence>
<organism>
    <name type="scientific">Streptomyces hygroscopicus subsp. jinggangensis (strain 5008)</name>
    <dbReference type="NCBI Taxonomy" id="1133850"/>
    <lineage>
        <taxon>Bacteria</taxon>
        <taxon>Bacillati</taxon>
        <taxon>Actinomycetota</taxon>
        <taxon>Actinomycetes</taxon>
        <taxon>Kitasatosporales</taxon>
        <taxon>Streptomycetaceae</taxon>
        <taxon>Streptomyces</taxon>
        <taxon>Streptomyces violaceusniger group</taxon>
    </lineage>
</organism>
<comment type="function">
    <text evidence="2 3">Involved in the biosynthesis of the antifungal agent validamycin A (PubMed:16632251). Catalyzes the condensation between GDP-valienol and validamine 7-phosphate via a nonglycosidic C-N bond formation to yield validoxylamine A 7'-phosphate (PubMed:22384130).</text>
</comment>
<comment type="catalytic activity">
    <reaction evidence="1">
        <text>validamine 7-phosphate + GDP-valienol = validoxylamine A 7'-phosphate + GDP + H(+)</text>
        <dbReference type="Rhea" id="RHEA:32119"/>
        <dbReference type="ChEBI" id="CHEBI:15378"/>
        <dbReference type="ChEBI" id="CHEBI:58189"/>
        <dbReference type="ChEBI" id="CHEBI:91253"/>
        <dbReference type="ChEBI" id="CHEBI:111503"/>
        <dbReference type="ChEBI" id="CHEBI:111504"/>
        <dbReference type="EC" id="2.5.1.135"/>
    </reaction>
</comment>
<comment type="subunit">
    <text evidence="3">Homodimer.</text>
</comment>
<comment type="disruption phenotype">
    <text evidence="3">Cells lacking this gene are unable to produce both validoxylamine A and validamycin A.</text>
</comment>
<comment type="similarity">
    <text evidence="5">Belongs to the glycosyltransferase 20 family.</text>
</comment>
<reference key="1">
    <citation type="journal article" date="2006" name="Chem. Biol.">
        <title>Functional analysis of the validamycin biosynthetic gene cluster and engineered production of validoxylamine A.</title>
        <authorList>
            <person name="Bai L."/>
            <person name="Li L."/>
            <person name="Xu H."/>
            <person name="Minagawa K."/>
            <person name="Yu Y."/>
            <person name="Zhang Y."/>
            <person name="Zhou X."/>
            <person name="Floss H.G."/>
            <person name="Mahmud T."/>
            <person name="Deng Z."/>
        </authorList>
    </citation>
    <scope>NUCLEOTIDE SEQUENCE [GENOMIC DNA]</scope>
    <scope>FUNCTION</scope>
    <source>
        <strain evidence="7">5008</strain>
    </source>
</reference>
<reference key="2">
    <citation type="journal article" date="2012" name="BMC Genomics">
        <title>Genomic and transcriptomic insights into the thermo-regulated biosynthesis of validamycin in Streptomyces hygroscopicus 5008.</title>
        <authorList>
            <person name="Wu H."/>
            <person name="Qu S."/>
            <person name="Lu C."/>
            <person name="Zheng H."/>
            <person name="Zhou X."/>
            <person name="Bai L."/>
            <person name="Deng Z."/>
        </authorList>
    </citation>
    <scope>NUCLEOTIDE SEQUENCE [LARGE SCALE GENOMIC DNA]</scope>
    <source>
        <strain>5008</strain>
    </source>
</reference>
<reference key="3">
    <citation type="journal article" date="2012" name="PLoS ONE">
        <title>Structural and functional analysis of validoxylamine A 7'-phosphate synthase ValL involved in validamycin A biosynthesis.</title>
        <authorList>
            <person name="Zheng L."/>
            <person name="Zhou X."/>
            <person name="Zhang H."/>
            <person name="Ji X."/>
            <person name="Li L."/>
            <person name="Huang L."/>
            <person name="Bai L."/>
            <person name="Zhang H."/>
        </authorList>
    </citation>
    <scope>X-RAY CRYSTALLOGRAPHY (1.70 ANGSTROMS) OF 2-497 IN COMPLEX WITH SUBSTRATE ANALOG</scope>
    <scope>FUNCTION</scope>
    <scope>DISRUPTION PHENOTYPE</scope>
    <scope>SUBUNIT</scope>
    <source>
        <strain>5008</strain>
    </source>
</reference>
<gene>
    <name evidence="4" type="primary">valL</name>
    <name evidence="8" type="ordered locus">SHJG_0274</name>
</gene>
<proteinExistence type="evidence at protein level"/>
<name>VALL_STRHJ</name>